<name>CEP3_HHV7J</name>
<reference key="1">
    <citation type="journal article" date="1996" name="J. Virol.">
        <title>Determination and analysis of the complete nucleotide sequence of human herpesvirus.</title>
        <authorList>
            <person name="Nicholas J."/>
        </authorList>
    </citation>
    <scope>NUCLEOTIDE SEQUENCE [LARGE SCALE GENOMIC DNA]</scope>
</reference>
<sequence length="73" mass="8212">MGSKCCKTIHGGIFSKAEDTLVDYKGKYINLEKEFSALSDTESEEELQLEKPLLNKQDSSVSLTQKKLENQSK</sequence>
<protein>
    <recommendedName>
        <fullName evidence="1">Cytoplasmic envelopment protein 3</fullName>
    </recommendedName>
</protein>
<proteinExistence type="inferred from homology"/>
<gene>
    <name type="primary">U71</name>
</gene>
<organismHost>
    <name type="scientific">Homo sapiens</name>
    <name type="common">Human</name>
    <dbReference type="NCBI Taxonomy" id="9606"/>
</organismHost>
<accession>P52358</accession>
<comment type="function">
    <text evidence="1">Plays an important role in the cytoplasmic envelopment of tegument proteins and capsids during the assembly and egress processes. Also participates in viral entry at the fusion step probably by regulating the core fusion machinery.</text>
</comment>
<comment type="subunit">
    <text evidence="1">Interacts with cytoplasmic envelopment protein 2; this interaction is essential for the proper localization of each protein to the assembly complex and thus for the production of infectious virus.</text>
</comment>
<comment type="subcellular location">
    <subcellularLocation>
        <location evidence="1">Virion tegument</location>
    </subcellularLocation>
    <subcellularLocation>
        <location evidence="1">Virion membrane</location>
        <topology evidence="1">Lipid-anchor</topology>
    </subcellularLocation>
    <subcellularLocation>
        <location evidence="1">Host cell membrane</location>
        <topology evidence="1">Lipid-anchor</topology>
        <orientation evidence="1">Cytoplasmic side</orientation>
    </subcellularLocation>
    <subcellularLocation>
        <location evidence="1">Host Golgi apparatus membrane</location>
        <topology evidence="1">Lipid-anchor</topology>
        <orientation evidence="1">Cytoplasmic side</orientation>
    </subcellularLocation>
    <text evidence="1">Virion membrane-associated tegument protein. Associates with host membrane lipids rafts. During virion morphogenesis, this protein probably accumulates in the endosomes and trans-Golgi where secondary envelopment occurs. It is probably transported to the cell surface from where it is endocytosed and directed to the trans-Golgi network (TGN).</text>
</comment>
<comment type="PTM">
    <text evidence="1">Myristoylation and palmitoylation (probably on one or more of the nearby cysteines at the N-terminus) enable membrane-binding and Golgi apparatus-specific targeting and are essential for efficient packaging.</text>
</comment>
<comment type="PTM">
    <text evidence="1">Phosphorylated. Phosphorylation does not seem to be required for recycling to the host Golgi apparatus. Packaging is selective for underphosphorylated forms.</text>
</comment>
<comment type="similarity">
    <text evidence="1">Belongs to the herpesviridae cytoplasmic envelopment protein 3 family.</text>
</comment>
<keyword id="KW-1032">Host cell membrane</keyword>
<keyword id="KW-1040">Host Golgi apparatus</keyword>
<keyword id="KW-1043">Host membrane</keyword>
<keyword id="KW-0449">Lipoprotein</keyword>
<keyword id="KW-0472">Membrane</keyword>
<keyword id="KW-0519">Myristate</keyword>
<keyword id="KW-0564">Palmitate</keyword>
<keyword id="KW-0597">Phosphoprotein</keyword>
<keyword id="KW-1185">Reference proteome</keyword>
<keyword id="KW-0946">Virion</keyword>
<keyword id="KW-0920">Virion tegument</keyword>
<organism>
    <name type="scientific">Human herpesvirus 7 (strain JI)</name>
    <name type="common">HHV-7</name>
    <name type="synonym">Human T lymphotropic virus</name>
    <dbReference type="NCBI Taxonomy" id="57278"/>
    <lineage>
        <taxon>Viruses</taxon>
        <taxon>Duplodnaviria</taxon>
        <taxon>Heunggongvirae</taxon>
        <taxon>Peploviricota</taxon>
        <taxon>Herviviricetes</taxon>
        <taxon>Herpesvirales</taxon>
        <taxon>Orthoherpesviridae</taxon>
        <taxon>Betaherpesvirinae</taxon>
        <taxon>Roseolovirus</taxon>
        <taxon>Roseolovirus humanbeta7</taxon>
        <taxon>Human betaherpesvirus 7</taxon>
    </lineage>
</organism>
<dbReference type="EMBL" id="U43400">
    <property type="protein sequence ID" value="AAC54732.1"/>
    <property type="molecule type" value="Genomic_DNA"/>
</dbReference>
<dbReference type="PIR" id="T41972">
    <property type="entry name" value="T41972"/>
</dbReference>
<dbReference type="RefSeq" id="YP_073811.1">
    <property type="nucleotide sequence ID" value="NC_001716.2"/>
</dbReference>
<dbReference type="GeneID" id="3289529"/>
<dbReference type="KEGG" id="vg:3289529"/>
<dbReference type="Proteomes" id="UP000009246">
    <property type="component" value="Segment"/>
</dbReference>
<dbReference type="GO" id="GO:0044178">
    <property type="term" value="C:host cell Golgi membrane"/>
    <property type="evidence" value="ECO:0007669"/>
    <property type="project" value="UniProtKB-SubCell"/>
</dbReference>
<dbReference type="GO" id="GO:0020002">
    <property type="term" value="C:host cell plasma membrane"/>
    <property type="evidence" value="ECO:0007669"/>
    <property type="project" value="UniProtKB-SubCell"/>
</dbReference>
<dbReference type="GO" id="GO:0016020">
    <property type="term" value="C:membrane"/>
    <property type="evidence" value="ECO:0007669"/>
    <property type="project" value="UniProtKB-KW"/>
</dbReference>
<dbReference type="GO" id="GO:0019033">
    <property type="term" value="C:viral tegument"/>
    <property type="evidence" value="ECO:0007669"/>
    <property type="project" value="UniProtKB-SubCell"/>
</dbReference>
<dbReference type="GO" id="GO:0055036">
    <property type="term" value="C:virion membrane"/>
    <property type="evidence" value="ECO:0007669"/>
    <property type="project" value="UniProtKB-SubCell"/>
</dbReference>
<dbReference type="GO" id="GO:0046760">
    <property type="term" value="P:viral budding from Golgi membrane"/>
    <property type="evidence" value="ECO:0007669"/>
    <property type="project" value="UniProtKB-UniRule"/>
</dbReference>
<dbReference type="HAMAP" id="MF_04041">
    <property type="entry name" value="HSV_CEP3_betahv"/>
    <property type="match status" value="1"/>
</dbReference>
<dbReference type="InterPro" id="IPR020170">
    <property type="entry name" value="Herpes_UL11_megaloV/roseoloV"/>
</dbReference>
<dbReference type="InterPro" id="IPR034705">
    <property type="entry name" value="HSV_CEP3_betahv"/>
</dbReference>
<dbReference type="Pfam" id="PF17474">
    <property type="entry name" value="U71"/>
    <property type="match status" value="1"/>
</dbReference>
<evidence type="ECO:0000255" key="1">
    <source>
        <dbReference type="HAMAP-Rule" id="MF_04041"/>
    </source>
</evidence>
<feature type="initiator methionine" description="Removed; by host" evidence="1">
    <location>
        <position position="1"/>
    </location>
</feature>
<feature type="chain" id="PRO_0000115931" description="Cytoplasmic envelopment protein 3" evidence="1">
    <location>
        <begin position="2"/>
        <end position="73"/>
    </location>
</feature>
<feature type="lipid moiety-binding region" description="N-myristoyl glycine; by host" evidence="1">
    <location>
        <position position="2"/>
    </location>
</feature>